<keyword id="KW-0961">Cell wall biogenesis/degradation</keyword>
<keyword id="KW-0256">Endoplasmic reticulum</keyword>
<keyword id="KW-0472">Membrane</keyword>
<keyword id="KW-0653">Protein transport</keyword>
<keyword id="KW-1185">Reference proteome</keyword>
<keyword id="KW-0812">Transmembrane</keyword>
<keyword id="KW-1133">Transmembrane helix</keyword>
<keyword id="KW-0813">Transport</keyword>
<protein>
    <recommendedName>
        <fullName>Chitin synthase export chaperone</fullName>
    </recommendedName>
</protein>
<feature type="chain" id="PRO_0000202922" description="Chitin synthase export chaperone">
    <location>
        <begin position="1"/>
        <end position="316"/>
    </location>
</feature>
<feature type="transmembrane region" description="Helical" evidence="1">
    <location>
        <begin position="62"/>
        <end position="82"/>
    </location>
</feature>
<feature type="transmembrane region" description="Helical" evidence="1">
    <location>
        <begin position="99"/>
        <end position="119"/>
    </location>
</feature>
<feature type="transmembrane region" description="Helical" evidence="1">
    <location>
        <begin position="130"/>
        <end position="150"/>
    </location>
</feature>
<feature type="transmembrane region" description="Helical" evidence="1">
    <location>
        <begin position="170"/>
        <end position="190"/>
    </location>
</feature>
<feature type="transmembrane region" description="Helical" evidence="1">
    <location>
        <begin position="200"/>
        <end position="220"/>
    </location>
</feature>
<feature type="transmembrane region" description="Helical" evidence="1">
    <location>
        <begin position="233"/>
        <end position="253"/>
    </location>
</feature>
<feature type="transmembrane region" description="Helical" evidence="1">
    <location>
        <begin position="266"/>
        <end position="286"/>
    </location>
</feature>
<comment type="function">
    <text evidence="2 3 4 5 7">Chaperone required for the export of the chitin synthase CHS3 from the endoplasmic reticulum.</text>
</comment>
<comment type="subunit">
    <text evidence="6">Interacts with CHS3.</text>
</comment>
<comment type="interaction">
    <interactant intactId="EBI-24756">
        <id>P38843</id>
    </interactant>
    <interactant intactId="EBI-4632">
        <id>P29465</id>
        <label>CHS3</label>
    </interactant>
    <organismsDiffer>false</organismsDiffer>
    <experiments>3</experiments>
</comment>
<comment type="subcellular location">
    <subcellularLocation>
        <location evidence="2">Endoplasmic reticulum membrane</location>
        <topology evidence="2">Multi-pass membrane protein</topology>
    </subcellularLocation>
</comment>
<comment type="disruption phenotype">
    <text evidence="7">Abolishes CHS3 localization to the bud neck with increased protein localization to the ER membrane.</text>
</comment>
<comment type="similarity">
    <text evidence="8">Belongs to the CHS7 family.</text>
</comment>
<sequence length="316" mass="34898">MAFSDFAAICSKTPLPLCSVIKSKTHLILSNSTIIHDFDPLNLNVGVLPRCYARSIDLANTVIFDVGNAFINIGALGVILIILYNIRQKYTAIGRSEYLYFFQLTLLLIIFTLVVDCGVSPPGSGSYPYFVAIQIGLAGACCWALLIIGFLGFNLWEDGTTKSMLLVRGTSMLGFIANFLASILTFKAWITDHKVATMNASGMIVVVYIINAIFLFVFVICQLLVSLLVVRNLWVTGAIFLGLFFFVAGQVLVYAFSTQICEGFKHYLDGLFFGSICNVFTLMMVYKTWDMTTDDDLEFGVSVSKDGDVVYDNGFM</sequence>
<gene>
    <name type="primary">CHS7</name>
    <name type="ordered locus">YHR142W</name>
</gene>
<proteinExistence type="evidence at protein level"/>
<name>CHS7_YEAST</name>
<reference key="1">
    <citation type="journal article" date="1994" name="Science">
        <title>Complete nucleotide sequence of Saccharomyces cerevisiae chromosome VIII.</title>
        <authorList>
            <person name="Johnston M."/>
            <person name="Andrews S."/>
            <person name="Brinkman R."/>
            <person name="Cooper J."/>
            <person name="Ding H."/>
            <person name="Dover J."/>
            <person name="Du Z."/>
            <person name="Favello A."/>
            <person name="Fulton L."/>
            <person name="Gattung S."/>
            <person name="Geisel C."/>
            <person name="Kirsten J."/>
            <person name="Kucaba T."/>
            <person name="Hillier L.W."/>
            <person name="Jier M."/>
            <person name="Johnston L."/>
            <person name="Langston Y."/>
            <person name="Latreille P."/>
            <person name="Louis E.J."/>
            <person name="Macri C."/>
            <person name="Mardis E."/>
            <person name="Menezes S."/>
            <person name="Mouser L."/>
            <person name="Nhan M."/>
            <person name="Rifkin L."/>
            <person name="Riles L."/>
            <person name="St Peter H."/>
            <person name="Trevaskis E."/>
            <person name="Vaughan K."/>
            <person name="Vignati D."/>
            <person name="Wilcox L."/>
            <person name="Wohldman P."/>
            <person name="Waterston R."/>
            <person name="Wilson R."/>
            <person name="Vaudin M."/>
        </authorList>
    </citation>
    <scope>NUCLEOTIDE SEQUENCE [LARGE SCALE GENOMIC DNA]</scope>
    <source>
        <strain>ATCC 204508 / S288c</strain>
    </source>
</reference>
<reference key="2">
    <citation type="journal article" date="2014" name="G3 (Bethesda)">
        <title>The reference genome sequence of Saccharomyces cerevisiae: Then and now.</title>
        <authorList>
            <person name="Engel S.R."/>
            <person name="Dietrich F.S."/>
            <person name="Fisk D.G."/>
            <person name="Binkley G."/>
            <person name="Balakrishnan R."/>
            <person name="Costanzo M.C."/>
            <person name="Dwight S.S."/>
            <person name="Hitz B.C."/>
            <person name="Karra K."/>
            <person name="Nash R.S."/>
            <person name="Weng S."/>
            <person name="Wong E.D."/>
            <person name="Lloyd P."/>
            <person name="Skrzypek M.S."/>
            <person name="Miyasato S.R."/>
            <person name="Simison M."/>
            <person name="Cherry J.M."/>
        </authorList>
    </citation>
    <scope>GENOME REANNOTATION</scope>
    <source>
        <strain>ATCC 204508 / S288c</strain>
    </source>
</reference>
<reference key="3">
    <citation type="journal article" date="2007" name="Genome Res.">
        <title>Approaching a complete repository of sequence-verified protein-encoding clones for Saccharomyces cerevisiae.</title>
        <authorList>
            <person name="Hu Y."/>
            <person name="Rolfs A."/>
            <person name="Bhullar B."/>
            <person name="Murthy T.V.S."/>
            <person name="Zhu C."/>
            <person name="Berger M.F."/>
            <person name="Camargo A.A."/>
            <person name="Kelley F."/>
            <person name="McCarron S."/>
            <person name="Jepson D."/>
            <person name="Richardson A."/>
            <person name="Raphael J."/>
            <person name="Moreira D."/>
            <person name="Taycher E."/>
            <person name="Zuo D."/>
            <person name="Mohr S."/>
            <person name="Kane M.F."/>
            <person name="Williamson J."/>
            <person name="Simpson A.J.G."/>
            <person name="Bulyk M.L."/>
            <person name="Harlow E."/>
            <person name="Marsischky G."/>
            <person name="Kolodner R.D."/>
            <person name="LaBaer J."/>
        </authorList>
    </citation>
    <scope>NUCLEOTIDE SEQUENCE [GENOMIC DNA]</scope>
    <source>
        <strain>ATCC 204508 / S288c</strain>
    </source>
</reference>
<reference key="4">
    <citation type="journal article" date="1999" name="J. Cell Biol.">
        <title>Chs7p, a new protein involved in the control of protein export from the endoplasmic reticulum that is specifically engaged in the regulation of chitin synthesis in Saccharomyces cerevisiae.</title>
        <authorList>
            <person name="Trilla J.A."/>
            <person name="Duran A."/>
            <person name="Roncero C."/>
        </authorList>
    </citation>
    <scope>FUNCTION</scope>
    <scope>SUBCELLULAR LOCATION</scope>
</reference>
<reference key="5">
    <citation type="journal article" date="2002" name="Eur. J. Biochem.">
        <title>Involvement of GFA1, which encodes glutamine-fructose-6-phosphate amidotransferase, in the activation of the chitin synthesis pathway in response to cell-wall defects in Saccharomyces cerevisiae.</title>
        <authorList>
            <person name="Lagorce A."/>
            <person name="Le Berre-Anton V."/>
            <person name="Aguilar-Uscanga B."/>
            <person name="Martin-Yken H."/>
            <person name="Dagkessamanskaia A."/>
            <person name="Francois J."/>
        </authorList>
    </citation>
    <scope>FUNCTION</scope>
</reference>
<reference key="6">
    <citation type="journal article" date="2002" name="Yeast">
        <title>Maintenance of cell integrity in the gas1 mutant of Saccharomyces cerevisiae requires the Chs3p-targeting and activation pathway and involves an unusual Chs3p localization.</title>
        <authorList>
            <person name="Carotti C."/>
            <person name="Ferrario L."/>
            <person name="Roncero C."/>
            <person name="Valdivieso M.-H."/>
            <person name="Duran A."/>
            <person name="Popolo L."/>
        </authorList>
    </citation>
    <scope>FUNCTION</scope>
</reference>
<reference key="7">
    <citation type="journal article" date="2005" name="J. Cell Biol.">
        <title>Specialized membrane-localized chaperones prevent aggregation of polytopic proteins in the ER.</title>
        <authorList>
            <person name="Kota J."/>
            <person name="Ljungdahl P.O."/>
        </authorList>
    </citation>
    <scope>FUNCTION</scope>
</reference>
<reference key="8">
    <citation type="journal article" date="2006" name="J. Cell Biol.">
        <title>Palmitoylation by the DHHC protein Pfa4 regulates the ER exit of Chs3.</title>
        <authorList>
            <person name="Lam K.K.Y."/>
            <person name="Davey M."/>
            <person name="Sun B."/>
            <person name="Roth A.F."/>
            <person name="Davis N.G."/>
            <person name="Conibear E."/>
        </authorList>
    </citation>
    <scope>INTERACTION WITH CHS3</scope>
</reference>
<reference key="9">
    <citation type="journal article" date="2017" name="Int. J. Mol. Sci.">
        <title>In Vitro and In Vivo Studies on the Structural Organization of Chs3 from Saccharomyces cerevisiae.</title>
        <authorList>
            <person name="Gohlke S."/>
            <person name="Muthukrishnan S."/>
            <person name="Merzendorfer H."/>
        </authorList>
    </citation>
    <scope>FUNCTION</scope>
    <scope>DISRUPTION PHENOTYPE</scope>
</reference>
<organism>
    <name type="scientific">Saccharomyces cerevisiae (strain ATCC 204508 / S288c)</name>
    <name type="common">Baker's yeast</name>
    <dbReference type="NCBI Taxonomy" id="559292"/>
    <lineage>
        <taxon>Eukaryota</taxon>
        <taxon>Fungi</taxon>
        <taxon>Dikarya</taxon>
        <taxon>Ascomycota</taxon>
        <taxon>Saccharomycotina</taxon>
        <taxon>Saccharomycetes</taxon>
        <taxon>Saccharomycetales</taxon>
        <taxon>Saccharomycetaceae</taxon>
        <taxon>Saccharomyces</taxon>
    </lineage>
</organism>
<accession>P38843</accession>
<accession>D3DL91</accession>
<evidence type="ECO:0000255" key="1"/>
<evidence type="ECO:0000269" key="2">
    <source>
    </source>
</evidence>
<evidence type="ECO:0000269" key="3">
    <source>
    </source>
</evidence>
<evidence type="ECO:0000269" key="4">
    <source>
    </source>
</evidence>
<evidence type="ECO:0000269" key="5">
    <source>
    </source>
</evidence>
<evidence type="ECO:0000269" key="6">
    <source>
    </source>
</evidence>
<evidence type="ECO:0000269" key="7">
    <source>
    </source>
</evidence>
<evidence type="ECO:0000305" key="8"/>
<dbReference type="EMBL" id="U10397">
    <property type="protein sequence ID" value="AAB68984.1"/>
    <property type="molecule type" value="Genomic_DNA"/>
</dbReference>
<dbReference type="EMBL" id="AY692978">
    <property type="protein sequence ID" value="AAT92997.1"/>
    <property type="molecule type" value="Genomic_DNA"/>
</dbReference>
<dbReference type="EMBL" id="BK006934">
    <property type="protein sequence ID" value="DAA06835.1"/>
    <property type="molecule type" value="Genomic_DNA"/>
</dbReference>
<dbReference type="PIR" id="S46761">
    <property type="entry name" value="S46761"/>
</dbReference>
<dbReference type="RefSeq" id="NP_012011.1">
    <property type="nucleotide sequence ID" value="NM_001179272.1"/>
</dbReference>
<dbReference type="BioGRID" id="36575">
    <property type="interactions" value="238"/>
</dbReference>
<dbReference type="DIP" id="DIP-5238N"/>
<dbReference type="FunCoup" id="P38843">
    <property type="interactions" value="101"/>
</dbReference>
<dbReference type="IntAct" id="P38843">
    <property type="interactions" value="4"/>
</dbReference>
<dbReference type="MINT" id="P38843"/>
<dbReference type="STRING" id="4932.YHR142W"/>
<dbReference type="PaxDb" id="4932-YHR142W"/>
<dbReference type="PeptideAtlas" id="P38843"/>
<dbReference type="EnsemblFungi" id="YHR142W_mRNA">
    <property type="protein sequence ID" value="YHR142W"/>
    <property type="gene ID" value="YHR142W"/>
</dbReference>
<dbReference type="GeneID" id="856545"/>
<dbReference type="KEGG" id="sce:YHR142W"/>
<dbReference type="AGR" id="SGD:S000001184"/>
<dbReference type="SGD" id="S000001184">
    <property type="gene designation" value="CHS7"/>
</dbReference>
<dbReference type="VEuPathDB" id="FungiDB:YHR142W"/>
<dbReference type="eggNOG" id="ENOG502QRVH">
    <property type="taxonomic scope" value="Eukaryota"/>
</dbReference>
<dbReference type="HOGENOM" id="CLU_050424_1_1_1"/>
<dbReference type="InParanoid" id="P38843"/>
<dbReference type="OMA" id="TVWEVKD"/>
<dbReference type="OrthoDB" id="2189463at2759"/>
<dbReference type="BioCyc" id="YEAST:G3O-31178-MONOMER"/>
<dbReference type="BioGRID-ORCS" id="856545">
    <property type="hits" value="0 hits in 10 CRISPR screens"/>
</dbReference>
<dbReference type="PRO" id="PR:P38843"/>
<dbReference type="Proteomes" id="UP000002311">
    <property type="component" value="Chromosome VIII"/>
</dbReference>
<dbReference type="RNAct" id="P38843">
    <property type="molecule type" value="protein"/>
</dbReference>
<dbReference type="GO" id="GO:0005935">
    <property type="term" value="C:cellular bud neck"/>
    <property type="evidence" value="ECO:0000314"/>
    <property type="project" value="SGD"/>
</dbReference>
<dbReference type="GO" id="GO:0005934">
    <property type="term" value="C:cellular bud tip"/>
    <property type="evidence" value="ECO:0007005"/>
    <property type="project" value="SGD"/>
</dbReference>
<dbReference type="GO" id="GO:0005783">
    <property type="term" value="C:endoplasmic reticulum"/>
    <property type="evidence" value="ECO:0007005"/>
    <property type="project" value="SGD"/>
</dbReference>
<dbReference type="GO" id="GO:0005789">
    <property type="term" value="C:endoplasmic reticulum membrane"/>
    <property type="evidence" value="ECO:0000314"/>
    <property type="project" value="SGD"/>
</dbReference>
<dbReference type="GO" id="GO:0005628">
    <property type="term" value="C:prospore membrane"/>
    <property type="evidence" value="ECO:0007005"/>
    <property type="project" value="SGD"/>
</dbReference>
<dbReference type="GO" id="GO:0051082">
    <property type="term" value="F:unfolded protein binding"/>
    <property type="evidence" value="ECO:0000315"/>
    <property type="project" value="SGD"/>
</dbReference>
<dbReference type="GO" id="GO:0071555">
    <property type="term" value="P:cell wall organization"/>
    <property type="evidence" value="ECO:0007669"/>
    <property type="project" value="UniProtKB-KW"/>
</dbReference>
<dbReference type="GO" id="GO:0006031">
    <property type="term" value="P:chitin biosynthetic process"/>
    <property type="evidence" value="ECO:0000315"/>
    <property type="project" value="SGD"/>
</dbReference>
<dbReference type="GO" id="GO:0006888">
    <property type="term" value="P:endoplasmic reticulum to Golgi vesicle-mediated transport"/>
    <property type="evidence" value="ECO:0000314"/>
    <property type="project" value="SGD"/>
</dbReference>
<dbReference type="GO" id="GO:0006457">
    <property type="term" value="P:protein folding"/>
    <property type="evidence" value="ECO:0000315"/>
    <property type="project" value="SGD"/>
</dbReference>
<dbReference type="GO" id="GO:0015031">
    <property type="term" value="P:protein transport"/>
    <property type="evidence" value="ECO:0007669"/>
    <property type="project" value="UniProtKB-KW"/>
</dbReference>
<dbReference type="InterPro" id="IPR022057">
    <property type="entry name" value="Chs7"/>
</dbReference>
<dbReference type="PANTHER" id="PTHR35329">
    <property type="entry name" value="CHITIN SYNTHASE EXPORT CHAPERONE"/>
    <property type="match status" value="1"/>
</dbReference>
<dbReference type="PANTHER" id="PTHR35329:SF2">
    <property type="entry name" value="CHITIN SYNTHASE EXPORT CHAPERONE"/>
    <property type="match status" value="1"/>
</dbReference>
<dbReference type="Pfam" id="PF12271">
    <property type="entry name" value="Chs7"/>
    <property type="match status" value="1"/>
</dbReference>